<name>DAZL_XENTR</name>
<accession>Q76CY5</accession>
<reference evidence="6 8" key="1">
    <citation type="journal article" date="2004" name="Dev. Dyn.">
        <title>Tracing of Xenopus tropicalis germ plasm and presumptive primordial germ cells with the Xenopus tropicalis DAZ-like gene.</title>
        <authorList>
            <person name="Sekizaki H."/>
            <person name="Takahashi S."/>
            <person name="Tanegashima K."/>
            <person name="Onuma Y."/>
            <person name="Haramoto Y."/>
            <person name="Asashima M."/>
        </authorList>
    </citation>
    <scope>NUCLEOTIDE SEQUENCE [MRNA]</scope>
    <scope>SUBCELLULAR LOCATION</scope>
    <scope>TISSUE SPECIFICITY</scope>
    <scope>DEVELOPMENTAL STAGE</scope>
    <source>
        <tissue evidence="5">Embryo</tissue>
    </source>
</reference>
<reference evidence="7" key="2">
    <citation type="submission" date="2004-03" db="EMBL/GenBank/DDBJ databases">
        <authorList>
            <consortium name="NIH - Xenopus Gene Collection (XGC) project"/>
        </authorList>
    </citation>
    <scope>NUCLEOTIDE SEQUENCE [LARGE SCALE MRNA]</scope>
    <source>
        <tissue evidence="7">Embryo</tissue>
    </source>
</reference>
<comment type="function">
    <text evidence="1">RNA-binding protein that is required for primordial germ cell (PGC) differentiation and indirectly necessary for the migration of PGCs through the endoderm. May promote meiotic cell division during spermatogenesis. Shows a preference for G- and U-rich RNAs and probably binds the 3'-UTR of target mRNAs. Stimulates the initiation of translation of mRNAs through the recruitment of poly(A)-binding proteins (PABPs) (By similarity).</text>
</comment>
<comment type="subunit">
    <text evidence="2">Interacts with the C-terminus of pabp1 and with epabp. Prior to oocyte maturation, found in a complex with epabp and pum2 proteins and spdy1 mRNA; pum2 dissociates from the complex during maturation (By similarity).</text>
</comment>
<comment type="subcellular location">
    <subcellularLocation>
        <location evidence="5">Cytoplasm</location>
    </subcellularLocation>
</comment>
<comment type="tissue specificity">
    <text evidence="5">Germ-line specific; expressed in adult testis and ovary. Localized specifically to the oocyte and embryonic germ plasm and to migrating primordial germ cells (PGCs).</text>
</comment>
<comment type="developmental stage">
    <text evidence="5">Expressed constantly during oogenesis from the previtellogenic (stage I) oocyte to the mature (stage VI) oocyte, and after fertilization until the early tadpole stage.</text>
</comment>
<comment type="similarity">
    <text evidence="4">Belongs to the RRM DAZ family.</text>
</comment>
<keyword id="KW-0963">Cytoplasm</keyword>
<keyword id="KW-0217">Developmental protein</keyword>
<keyword id="KW-0221">Differentiation</keyword>
<keyword id="KW-0896">Oogenesis</keyword>
<keyword id="KW-1185">Reference proteome</keyword>
<keyword id="KW-0694">RNA-binding</keyword>
<keyword id="KW-0744">Spermatogenesis</keyword>
<keyword id="KW-0810">Translation regulation</keyword>
<evidence type="ECO:0000250" key="1"/>
<evidence type="ECO:0000250" key="2">
    <source>
        <dbReference type="UniProtKB" id="O57437"/>
    </source>
</evidence>
<evidence type="ECO:0000255" key="3">
    <source>
        <dbReference type="PROSITE-ProRule" id="PRU00176"/>
    </source>
</evidence>
<evidence type="ECO:0000255" key="4">
    <source>
        <dbReference type="PROSITE-ProRule" id="PRU01238"/>
    </source>
</evidence>
<evidence type="ECO:0000269" key="5">
    <source>
    </source>
</evidence>
<evidence type="ECO:0000305" key="6"/>
<evidence type="ECO:0000312" key="7">
    <source>
        <dbReference type="EMBL" id="AAH67947.1"/>
    </source>
</evidence>
<evidence type="ECO:0000312" key="8">
    <source>
        <dbReference type="EMBL" id="BAC99992.1"/>
    </source>
</evidence>
<dbReference type="EMBL" id="AB109328">
    <property type="protein sequence ID" value="BAC99992.1"/>
    <property type="molecule type" value="mRNA"/>
</dbReference>
<dbReference type="EMBL" id="BC067947">
    <property type="protein sequence ID" value="AAH67947.1"/>
    <property type="molecule type" value="mRNA"/>
</dbReference>
<dbReference type="RefSeq" id="NP_989079.1">
    <property type="nucleotide sequence ID" value="NM_203748.1"/>
</dbReference>
<dbReference type="SMR" id="Q76CY5"/>
<dbReference type="FunCoup" id="Q76CY5">
    <property type="interactions" value="72"/>
</dbReference>
<dbReference type="STRING" id="8364.ENSXETP00000051550"/>
<dbReference type="PaxDb" id="8364-ENSXETP00000053944"/>
<dbReference type="DNASU" id="394676"/>
<dbReference type="GeneID" id="394676"/>
<dbReference type="KEGG" id="xtr:394676"/>
<dbReference type="AGR" id="Xenbase:XB-GENE-1006218"/>
<dbReference type="CTD" id="1618"/>
<dbReference type="Xenbase" id="XB-GENE-1006218">
    <property type="gene designation" value="dazl"/>
</dbReference>
<dbReference type="eggNOG" id="KOG0118">
    <property type="taxonomic scope" value="Eukaryota"/>
</dbReference>
<dbReference type="HOGENOM" id="CLU_084802_0_0_1"/>
<dbReference type="InParanoid" id="Q76CY5"/>
<dbReference type="OMA" id="SQEDYFK"/>
<dbReference type="OrthoDB" id="762982at2759"/>
<dbReference type="PhylomeDB" id="Q76CY5"/>
<dbReference type="TreeFam" id="TF324396"/>
<dbReference type="Proteomes" id="UP000008143">
    <property type="component" value="Chromosome 1"/>
</dbReference>
<dbReference type="Bgee" id="ENSXETG00000025199">
    <property type="expression patterns" value="Expressed in testis and 14 other cell types or tissues"/>
</dbReference>
<dbReference type="GO" id="GO:0005737">
    <property type="term" value="C:cytoplasm"/>
    <property type="evidence" value="ECO:0000250"/>
    <property type="project" value="UniProtKB"/>
</dbReference>
<dbReference type="GO" id="GO:0032019">
    <property type="term" value="C:mitochondrial cloud"/>
    <property type="evidence" value="ECO:0000250"/>
    <property type="project" value="UniProtKB"/>
</dbReference>
<dbReference type="GO" id="GO:0045495">
    <property type="term" value="C:pole plasm"/>
    <property type="evidence" value="ECO:0000314"/>
    <property type="project" value="UniProtKB"/>
</dbReference>
<dbReference type="GO" id="GO:0003730">
    <property type="term" value="F:mRNA 3'-UTR binding"/>
    <property type="evidence" value="ECO:0007669"/>
    <property type="project" value="InterPro"/>
</dbReference>
<dbReference type="GO" id="GO:0003723">
    <property type="term" value="F:RNA binding"/>
    <property type="evidence" value="ECO:0000250"/>
    <property type="project" value="UniProtKB"/>
</dbReference>
<dbReference type="GO" id="GO:0008494">
    <property type="term" value="F:translation activator activity"/>
    <property type="evidence" value="ECO:0000250"/>
    <property type="project" value="UniProtKB"/>
</dbReference>
<dbReference type="GO" id="GO:0007281">
    <property type="term" value="P:germ cell development"/>
    <property type="evidence" value="ECO:0000250"/>
    <property type="project" value="UniProtKB"/>
</dbReference>
<dbReference type="GO" id="GO:0008354">
    <property type="term" value="P:germ cell migration"/>
    <property type="evidence" value="ECO:0000250"/>
    <property type="project" value="UniProtKB"/>
</dbReference>
<dbReference type="GO" id="GO:0048477">
    <property type="term" value="P:oogenesis"/>
    <property type="evidence" value="ECO:0007669"/>
    <property type="project" value="UniProtKB-KW"/>
</dbReference>
<dbReference type="GO" id="GO:0045948">
    <property type="term" value="P:positive regulation of translational initiation"/>
    <property type="evidence" value="ECO:0000250"/>
    <property type="project" value="UniProtKB"/>
</dbReference>
<dbReference type="GO" id="GO:0007283">
    <property type="term" value="P:spermatogenesis"/>
    <property type="evidence" value="ECO:0007669"/>
    <property type="project" value="UniProtKB-KW"/>
</dbReference>
<dbReference type="CDD" id="cd12672">
    <property type="entry name" value="RRM_DAZL"/>
    <property type="match status" value="1"/>
</dbReference>
<dbReference type="FunFam" id="3.30.70.330:FF:000180">
    <property type="entry name" value="Deleted in azoospermia-like"/>
    <property type="match status" value="1"/>
</dbReference>
<dbReference type="Gene3D" id="3.30.70.330">
    <property type="match status" value="1"/>
</dbReference>
<dbReference type="InterPro" id="IPR043628">
    <property type="entry name" value="DAZ_dom"/>
</dbReference>
<dbReference type="InterPro" id="IPR037551">
    <property type="entry name" value="DAZ_RRM_vert"/>
</dbReference>
<dbReference type="InterPro" id="IPR012677">
    <property type="entry name" value="Nucleotide-bd_a/b_plait_sf"/>
</dbReference>
<dbReference type="InterPro" id="IPR035979">
    <property type="entry name" value="RBD_domain_sf"/>
</dbReference>
<dbReference type="InterPro" id="IPR000504">
    <property type="entry name" value="RRM_dom"/>
</dbReference>
<dbReference type="PANTHER" id="PTHR11176">
    <property type="entry name" value="BOULE-RELATED"/>
    <property type="match status" value="1"/>
</dbReference>
<dbReference type="PANTHER" id="PTHR11176:SF4">
    <property type="entry name" value="DELETED IN AZOOSPERMIA-LIKE"/>
    <property type="match status" value="1"/>
</dbReference>
<dbReference type="Pfam" id="PF00076">
    <property type="entry name" value="RRM_1"/>
    <property type="match status" value="1"/>
</dbReference>
<dbReference type="SMART" id="SM00360">
    <property type="entry name" value="RRM"/>
    <property type="match status" value="1"/>
</dbReference>
<dbReference type="SUPFAM" id="SSF54928">
    <property type="entry name" value="RNA-binding domain, RBD"/>
    <property type="match status" value="1"/>
</dbReference>
<dbReference type="PROSITE" id="PS51890">
    <property type="entry name" value="DAZ"/>
    <property type="match status" value="1"/>
</dbReference>
<dbReference type="PROSITE" id="PS50102">
    <property type="entry name" value="RRM"/>
    <property type="match status" value="1"/>
</dbReference>
<sequence>MSATEASAGEEAASATSQAFVLPEGKVIPNTVFVGGIDITMDEMAIGNLFEKYGKVKDLKIITDRTGVSKGYGFVSFYDEVDVQKIVKSQINFHGKKLKLGPAIRKMQRICTYVQTSPVVISPPTQFHPTWNSQNADSYIQHSPIISPVTQYVQACPYPSSPPMAIQQIPVGCQQPSYFQVSPQWPTDQRNYMFPSPAFTFNYNCCEIDPNGGEPMPREYHIDQAVSASGANLQKRYVDMSTQTIISCLFDPAKKVRLFASQEDYIQDDSVHQFRRSKSVIKRVSN</sequence>
<organism>
    <name type="scientific">Xenopus tropicalis</name>
    <name type="common">Western clawed frog</name>
    <name type="synonym">Silurana tropicalis</name>
    <dbReference type="NCBI Taxonomy" id="8364"/>
    <lineage>
        <taxon>Eukaryota</taxon>
        <taxon>Metazoa</taxon>
        <taxon>Chordata</taxon>
        <taxon>Craniata</taxon>
        <taxon>Vertebrata</taxon>
        <taxon>Euteleostomi</taxon>
        <taxon>Amphibia</taxon>
        <taxon>Batrachia</taxon>
        <taxon>Anura</taxon>
        <taxon>Pipoidea</taxon>
        <taxon>Pipidae</taxon>
        <taxon>Xenopodinae</taxon>
        <taxon>Xenopus</taxon>
        <taxon>Silurana</taxon>
    </lineage>
</organism>
<feature type="chain" id="PRO_0000248851" description="Deleted in azoospermia-like">
    <location>
        <begin position="1"/>
        <end position="286"/>
    </location>
</feature>
<feature type="domain" description="RRM" evidence="3">
    <location>
        <begin position="30"/>
        <end position="105"/>
    </location>
</feature>
<feature type="domain" description="DAZ" evidence="4">
    <location>
        <begin position="155"/>
        <end position="180"/>
    </location>
</feature>
<protein>
    <recommendedName>
        <fullName>Deleted in azoospermia-like</fullName>
        <shortName>DAZ-like protein</shortName>
    </recommendedName>
    <alternativeName>
        <fullName>Xtdazl</fullName>
    </alternativeName>
</protein>
<proteinExistence type="evidence at transcript level"/>
<gene>
    <name evidence="8" type="primary">dazl</name>
</gene>